<comment type="function">
    <text evidence="1 4 6">Cold-inducible mRNA binding protein that plays a protective role in the genotoxic stress response by stabilizing transcripts of genes involved in cell survival. Acts as a translational activator. Seems to play an essential role in cold-induced suppression of cell proliferation. Binds specifically to the 3'-untranslated regions (3'-UTRs) of stress-responsive transcripts RPA2 and TXN. Acts as a translational repressor (By similarity). Promotes assembly of stress granules (SGs), when overexpressed.</text>
</comment>
<comment type="subunit">
    <text evidence="6">Interacts with EIF4G1. Associates with ribosomes.</text>
</comment>
<comment type="interaction">
    <interactant intactId="EBI-538850">
        <id>Q14011</id>
    </interactant>
    <interactant intactId="EBI-930964">
        <id>P54253</id>
        <label>ATXN1</label>
    </interactant>
    <organismsDiffer>false</organismsDiffer>
    <experiments>7</experiments>
</comment>
<comment type="interaction">
    <interactant intactId="EBI-538850">
        <id>Q14011</id>
    </interactant>
    <interactant intactId="EBI-304185">
        <id>P61978</id>
        <label>HNRNPK</label>
    </interactant>
    <organismsDiffer>false</organismsDiffer>
    <experiments>9</experiments>
</comment>
<comment type="interaction">
    <interactant intactId="EBI-538850">
        <id>Q14011</id>
    </interactant>
    <interactant intactId="EBI-7060731">
        <id>P61978-2</id>
        <label>HNRNPK</label>
    </interactant>
    <organismsDiffer>false</organismsDiffer>
    <experiments>3</experiments>
</comment>
<comment type="interaction">
    <interactant intactId="EBI-538850">
        <id>Q14011</id>
    </interactant>
    <interactant intactId="EBI-742808">
        <id>Q5VWX1</id>
        <label>KHDRBS2</label>
    </interactant>
    <organismsDiffer>false</organismsDiffer>
    <experiments>4</experiments>
</comment>
<comment type="interaction">
    <interactant intactId="EBI-538850">
        <id>Q14011</id>
    </interactant>
    <interactant intactId="EBI-739832">
        <id>Q8TBB1</id>
        <label>LNX1</label>
    </interactant>
    <organismsDiffer>false</organismsDiffer>
    <experiments>3</experiments>
</comment>
<comment type="interaction">
    <interactant intactId="EBI-538850">
        <id>Q14011</id>
    </interactant>
    <interactant intactId="EBI-743526">
        <id>P38159</id>
        <label>RBMX</label>
    </interactant>
    <organismsDiffer>false</organismsDiffer>
    <experiments>4</experiments>
</comment>
<comment type="interaction">
    <interactant intactId="EBI-538850">
        <id>Q14011</id>
    </interactant>
    <interactant intactId="EBI-8638511">
        <id>P0DJD3</id>
        <label>RBMY1A1</label>
    </interactant>
    <organismsDiffer>false</organismsDiffer>
    <experiments>3</experiments>
</comment>
<comment type="interaction">
    <interactant intactId="EBI-538850">
        <id>Q14011</id>
    </interactant>
    <interactant intactId="EBI-8642021">
        <id>Q15415</id>
        <label>RBMY1J</label>
    </interactant>
    <organismsDiffer>false</organismsDiffer>
    <experiments>3</experiments>
</comment>
<comment type="interaction">
    <interactant intactId="EBI-538850">
        <id>Q14011</id>
    </interactant>
    <interactant intactId="EBI-607085">
        <id>P09012</id>
        <label>SNRPA</label>
    </interactant>
    <organismsDiffer>false</organismsDiffer>
    <experiments>4</experiments>
</comment>
<comment type="interaction">
    <interactant intactId="EBI-538850">
        <id>Q14011</id>
    </interactant>
    <interactant intactId="EBI-372557">
        <id>P84103</id>
        <label>SRSF3</label>
    </interactant>
    <organismsDiffer>false</organismsDiffer>
    <experiments>3</experiments>
</comment>
<comment type="subcellular location">
    <subcellularLocation>
        <location evidence="4">Nucleus</location>
        <location evidence="4">Nucleoplasm</location>
    </subcellularLocation>
    <subcellularLocation>
        <location evidence="4">Cytoplasm</location>
    </subcellularLocation>
    <text evidence="1">Translocates from the nucleus to the cytoplasm after exposure to UV radiation. Translocates from the nucleus to the cytoplasm into stress granules upon various cytoplasmic stresses, such as osmotic and heat shocks. Its recruitment into stress granules occurs in the absence of TIAR proteins (By similarity).</text>
</comment>
<comment type="alternative products">
    <event type="alternative splicing"/>
    <isoform>
        <id>Q14011-1</id>
        <name>1</name>
        <sequence type="displayed"/>
    </isoform>
    <isoform>
        <id>Q14011-2</id>
        <name>2</name>
        <sequence type="described" ref="VSP_056402 VSP_056403"/>
    </isoform>
    <isoform>
        <id>Q14011-3</id>
        <name>3</name>
        <sequence type="described" ref="VSP_056895 VSP_056403"/>
    </isoform>
</comment>
<comment type="tissue specificity">
    <text>Ubiquitous.</text>
</comment>
<comment type="induction">
    <text evidence="5">By cold stress in response to DNA damage induced by UV irradiation or UV mimetic agents. Up-regulated by hypoxia.</text>
</comment>
<comment type="domain">
    <text evidence="1">Both the RRM domain and the arginine, glycine (RGG) rich domain are necessary for binding to the TXN 3'-untranslated region. Both the RRM domain and the arginine, glycine (RGG) rich domain (RGG repeats) are necessary for optimal recruitment into SGs upon cellular stress. The C-terminal domain containing RGG repeats is necessary for translational repression (By similarity).</text>
</comment>
<comment type="PTM">
    <text evidence="1">Methylated on arginine residues. Methylation of the RGG motifs is a prerequisite for recruitment into SGs (By similarity).</text>
</comment>
<comment type="PTM">
    <text evidence="6">Phosphorylated by CK2, GSK3A and GSK3B. Phosphorylation by GSK3B increases RNA-binding activity to the TXN 3'-UTR transcript upon exposure to UV radiation.</text>
</comment>
<reference key="1">
    <citation type="journal article" date="1997" name="Gene">
        <title>Cloning and characterization of human CIRP (cold-inducible RNA-binding protein) cDNA and chromosomal assignment of the gene.</title>
        <authorList>
            <person name="Nishiyama H."/>
            <person name="Higashitsuji H."/>
            <person name="Yokoi H."/>
            <person name="Itoh K."/>
            <person name="Danno S."/>
            <person name="Matsuda T."/>
            <person name="Fujita J."/>
        </authorList>
    </citation>
    <scope>NUCLEOTIDE SEQUENCE [MRNA] (ISOFORM 1)</scope>
</reference>
<reference key="2">
    <citation type="journal article" date="1997" name="J. Biol. Chem.">
        <title>Identification of several human homologs of hamster DNA damage-inducible transcripts. Cloning and characterization of a novel UV-inducible cDNA that codes for a putative RNA-binding protein.</title>
        <authorList>
            <person name="Sheikh M.S."/>
            <person name="Carrier F."/>
            <person name="Papathanasiou M.A."/>
            <person name="Hollander M.C."/>
            <person name="Zhan Q."/>
            <person name="Yu K."/>
            <person name="Fornace A.J. Jr."/>
        </authorList>
    </citation>
    <scope>NUCLEOTIDE SEQUENCE [MRNA] (ISOFORM 1)</scope>
</reference>
<reference key="3">
    <citation type="journal article" date="2004" name="Nat. Genet.">
        <title>Complete sequencing and characterization of 21,243 full-length human cDNAs.</title>
        <authorList>
            <person name="Ota T."/>
            <person name="Suzuki Y."/>
            <person name="Nishikawa T."/>
            <person name="Otsuki T."/>
            <person name="Sugiyama T."/>
            <person name="Irie R."/>
            <person name="Wakamatsu A."/>
            <person name="Hayashi K."/>
            <person name="Sato H."/>
            <person name="Nagai K."/>
            <person name="Kimura K."/>
            <person name="Makita H."/>
            <person name="Sekine M."/>
            <person name="Obayashi M."/>
            <person name="Nishi T."/>
            <person name="Shibahara T."/>
            <person name="Tanaka T."/>
            <person name="Ishii S."/>
            <person name="Yamamoto J."/>
            <person name="Saito K."/>
            <person name="Kawai Y."/>
            <person name="Isono Y."/>
            <person name="Nakamura Y."/>
            <person name="Nagahari K."/>
            <person name="Murakami K."/>
            <person name="Yasuda T."/>
            <person name="Iwayanagi T."/>
            <person name="Wagatsuma M."/>
            <person name="Shiratori A."/>
            <person name="Sudo H."/>
            <person name="Hosoiri T."/>
            <person name="Kaku Y."/>
            <person name="Kodaira H."/>
            <person name="Kondo H."/>
            <person name="Sugawara M."/>
            <person name="Takahashi M."/>
            <person name="Kanda K."/>
            <person name="Yokoi T."/>
            <person name="Furuya T."/>
            <person name="Kikkawa E."/>
            <person name="Omura Y."/>
            <person name="Abe K."/>
            <person name="Kamihara K."/>
            <person name="Katsuta N."/>
            <person name="Sato K."/>
            <person name="Tanikawa M."/>
            <person name="Yamazaki M."/>
            <person name="Ninomiya K."/>
            <person name="Ishibashi T."/>
            <person name="Yamashita H."/>
            <person name="Murakawa K."/>
            <person name="Fujimori K."/>
            <person name="Tanai H."/>
            <person name="Kimata M."/>
            <person name="Watanabe M."/>
            <person name="Hiraoka S."/>
            <person name="Chiba Y."/>
            <person name="Ishida S."/>
            <person name="Ono Y."/>
            <person name="Takiguchi S."/>
            <person name="Watanabe S."/>
            <person name="Yosida M."/>
            <person name="Hotuta T."/>
            <person name="Kusano J."/>
            <person name="Kanehori K."/>
            <person name="Takahashi-Fujii A."/>
            <person name="Hara H."/>
            <person name="Tanase T.-O."/>
            <person name="Nomura Y."/>
            <person name="Togiya S."/>
            <person name="Komai F."/>
            <person name="Hara R."/>
            <person name="Takeuchi K."/>
            <person name="Arita M."/>
            <person name="Imose N."/>
            <person name="Musashino K."/>
            <person name="Yuuki H."/>
            <person name="Oshima A."/>
            <person name="Sasaki N."/>
            <person name="Aotsuka S."/>
            <person name="Yoshikawa Y."/>
            <person name="Matsunawa H."/>
            <person name="Ichihara T."/>
            <person name="Shiohata N."/>
            <person name="Sano S."/>
            <person name="Moriya S."/>
            <person name="Momiyama H."/>
            <person name="Satoh N."/>
            <person name="Takami S."/>
            <person name="Terashima Y."/>
            <person name="Suzuki O."/>
            <person name="Nakagawa S."/>
            <person name="Senoh A."/>
            <person name="Mizoguchi H."/>
            <person name="Goto Y."/>
            <person name="Shimizu F."/>
            <person name="Wakebe H."/>
            <person name="Hishigaki H."/>
            <person name="Watanabe T."/>
            <person name="Sugiyama A."/>
            <person name="Takemoto M."/>
            <person name="Kawakami B."/>
            <person name="Yamazaki M."/>
            <person name="Watanabe K."/>
            <person name="Kumagai A."/>
            <person name="Itakura S."/>
            <person name="Fukuzumi Y."/>
            <person name="Fujimori Y."/>
            <person name="Komiyama M."/>
            <person name="Tashiro H."/>
            <person name="Tanigami A."/>
            <person name="Fujiwara T."/>
            <person name="Ono T."/>
            <person name="Yamada K."/>
            <person name="Fujii Y."/>
            <person name="Ozaki K."/>
            <person name="Hirao M."/>
            <person name="Ohmori Y."/>
            <person name="Kawabata A."/>
            <person name="Hikiji T."/>
            <person name="Kobatake N."/>
            <person name="Inagaki H."/>
            <person name="Ikema Y."/>
            <person name="Okamoto S."/>
            <person name="Okitani R."/>
            <person name="Kawakami T."/>
            <person name="Noguchi S."/>
            <person name="Itoh T."/>
            <person name="Shigeta K."/>
            <person name="Senba T."/>
            <person name="Matsumura K."/>
            <person name="Nakajima Y."/>
            <person name="Mizuno T."/>
            <person name="Morinaga M."/>
            <person name="Sasaki M."/>
            <person name="Togashi T."/>
            <person name="Oyama M."/>
            <person name="Hata H."/>
            <person name="Watanabe M."/>
            <person name="Komatsu T."/>
            <person name="Mizushima-Sugano J."/>
            <person name="Satoh T."/>
            <person name="Shirai Y."/>
            <person name="Takahashi Y."/>
            <person name="Nakagawa K."/>
            <person name="Okumura K."/>
            <person name="Nagase T."/>
            <person name="Nomura N."/>
            <person name="Kikuchi H."/>
            <person name="Masuho Y."/>
            <person name="Yamashita R."/>
            <person name="Nakai K."/>
            <person name="Yada T."/>
            <person name="Nakamura Y."/>
            <person name="Ohara O."/>
            <person name="Isogai T."/>
            <person name="Sugano S."/>
        </authorList>
    </citation>
    <scope>NUCLEOTIDE SEQUENCE [LARGE SCALE MRNA] (ISOFORMS 2 AND 3)</scope>
    <source>
        <tissue>Brain</tissue>
        <tissue>Uterus</tissue>
    </source>
</reference>
<reference key="4">
    <citation type="journal article" date="2004" name="Nature">
        <title>The DNA sequence and biology of human chromosome 19.</title>
        <authorList>
            <person name="Grimwood J."/>
            <person name="Gordon L.A."/>
            <person name="Olsen A.S."/>
            <person name="Terry A."/>
            <person name="Schmutz J."/>
            <person name="Lamerdin J.E."/>
            <person name="Hellsten U."/>
            <person name="Goodstein D."/>
            <person name="Couronne O."/>
            <person name="Tran-Gyamfi M."/>
            <person name="Aerts A."/>
            <person name="Altherr M."/>
            <person name="Ashworth L."/>
            <person name="Bajorek E."/>
            <person name="Black S."/>
            <person name="Branscomb E."/>
            <person name="Caenepeel S."/>
            <person name="Carrano A.V."/>
            <person name="Caoile C."/>
            <person name="Chan Y.M."/>
            <person name="Christensen M."/>
            <person name="Cleland C.A."/>
            <person name="Copeland A."/>
            <person name="Dalin E."/>
            <person name="Dehal P."/>
            <person name="Denys M."/>
            <person name="Detter J.C."/>
            <person name="Escobar J."/>
            <person name="Flowers D."/>
            <person name="Fotopulos D."/>
            <person name="Garcia C."/>
            <person name="Georgescu A.M."/>
            <person name="Glavina T."/>
            <person name="Gomez M."/>
            <person name="Gonzales E."/>
            <person name="Groza M."/>
            <person name="Hammon N."/>
            <person name="Hawkins T."/>
            <person name="Haydu L."/>
            <person name="Ho I."/>
            <person name="Huang W."/>
            <person name="Israni S."/>
            <person name="Jett J."/>
            <person name="Kadner K."/>
            <person name="Kimball H."/>
            <person name="Kobayashi A."/>
            <person name="Larionov V."/>
            <person name="Leem S.-H."/>
            <person name="Lopez F."/>
            <person name="Lou Y."/>
            <person name="Lowry S."/>
            <person name="Malfatti S."/>
            <person name="Martinez D."/>
            <person name="McCready P.M."/>
            <person name="Medina C."/>
            <person name="Morgan J."/>
            <person name="Nelson K."/>
            <person name="Nolan M."/>
            <person name="Ovcharenko I."/>
            <person name="Pitluck S."/>
            <person name="Pollard M."/>
            <person name="Popkie A.P."/>
            <person name="Predki P."/>
            <person name="Quan G."/>
            <person name="Ramirez L."/>
            <person name="Rash S."/>
            <person name="Retterer J."/>
            <person name="Rodriguez A."/>
            <person name="Rogers S."/>
            <person name="Salamov A."/>
            <person name="Salazar A."/>
            <person name="She X."/>
            <person name="Smith D."/>
            <person name="Slezak T."/>
            <person name="Solovyev V."/>
            <person name="Thayer N."/>
            <person name="Tice H."/>
            <person name="Tsai M."/>
            <person name="Ustaszewska A."/>
            <person name="Vo N."/>
            <person name="Wagner M."/>
            <person name="Wheeler J."/>
            <person name="Wu K."/>
            <person name="Xie G."/>
            <person name="Yang J."/>
            <person name="Dubchak I."/>
            <person name="Furey T.S."/>
            <person name="DeJong P."/>
            <person name="Dickson M."/>
            <person name="Gordon D."/>
            <person name="Eichler E.E."/>
            <person name="Pennacchio L.A."/>
            <person name="Richardson P."/>
            <person name="Stubbs L."/>
            <person name="Rokhsar D.S."/>
            <person name="Myers R.M."/>
            <person name="Rubin E.M."/>
            <person name="Lucas S.M."/>
        </authorList>
    </citation>
    <scope>NUCLEOTIDE SEQUENCE [LARGE SCALE GENOMIC DNA]</scope>
</reference>
<reference key="5">
    <citation type="journal article" date="2004" name="Genome Res.">
        <title>The status, quality, and expansion of the NIH full-length cDNA project: the Mammalian Gene Collection (MGC).</title>
        <authorList>
            <consortium name="The MGC Project Team"/>
        </authorList>
    </citation>
    <scope>NUCLEOTIDE SEQUENCE [LARGE SCALE MRNA] (ISOFORM 1)</scope>
    <source>
        <tissue>Lung</tissue>
        <tissue>Placenta</tissue>
    </source>
</reference>
<reference key="6">
    <citation type="journal article" date="2001" name="J. Biol. Chem.">
        <title>The UV-inducible RNA-binding protein A18 (A18 hnRNP) plays a protective role in the genotoxic stress response.</title>
        <authorList>
            <person name="Yang C."/>
            <person name="Carrier F."/>
        </authorList>
    </citation>
    <scope>FUNCTION</scope>
    <scope>RNA-BINDING</scope>
    <scope>SUBCELLULAR LOCATION</scope>
</reference>
<reference key="7">
    <citation type="journal article" date="2004" name="J. Cell Sci.">
        <title>Oxygen-regulated expression of the RNA-binding proteins RBM3 and CIRP by a HIF-1-independent mechanism.</title>
        <authorList>
            <person name="Wellmann S."/>
            <person name="Buehrer C."/>
            <person name="Moderegger E."/>
            <person name="Zelmer A."/>
            <person name="Kirschner R."/>
            <person name="Koehne P."/>
            <person name="Fujita J."/>
            <person name="Seeger K."/>
        </authorList>
    </citation>
    <scope>INDUCTION BY HYPOXIA</scope>
</reference>
<reference key="8">
    <citation type="journal article" date="2006" name="Nucleic Acids Res.">
        <title>Post-transcriptional regulation of thioredoxin by the stress inducible heterogeneous ribonucleoprotein A18.</title>
        <authorList>
            <person name="Yang R."/>
            <person name="Weber D.J."/>
            <person name="Carrier F."/>
        </authorList>
    </citation>
    <scope>FUNCTION</scope>
    <scope>PHOSPHORYLATION</scope>
    <scope>RNA-BINDING</scope>
    <scope>INTERACTION WITH EIF4G1</scope>
    <scope>ASSOCIATION WITH RIBOSOMES</scope>
</reference>
<reference key="9">
    <citation type="journal article" date="2008" name="Proc. Natl. Acad. Sci. U.S.A.">
        <title>A quantitative atlas of mitotic phosphorylation.</title>
        <authorList>
            <person name="Dephoure N."/>
            <person name="Zhou C."/>
            <person name="Villen J."/>
            <person name="Beausoleil S.A."/>
            <person name="Bakalarski C.E."/>
            <person name="Elledge S.J."/>
            <person name="Gygi S.P."/>
        </authorList>
    </citation>
    <scope>IDENTIFICATION BY MASS SPECTROMETRY [LARGE SCALE ANALYSIS]</scope>
    <source>
        <tissue>Cervix carcinoma</tissue>
    </source>
</reference>
<reference key="10">
    <citation type="journal article" date="2009" name="Sci. Signal.">
        <title>Quantitative phosphoproteomic analysis of T cell receptor signaling reveals system-wide modulation of protein-protein interactions.</title>
        <authorList>
            <person name="Mayya V."/>
            <person name="Lundgren D.H."/>
            <person name="Hwang S.-I."/>
            <person name="Rezaul K."/>
            <person name="Wu L."/>
            <person name="Eng J.K."/>
            <person name="Rodionov V."/>
            <person name="Han D.K."/>
        </authorList>
    </citation>
    <scope>IDENTIFICATION BY MASS SPECTROMETRY [LARGE SCALE ANALYSIS]</scope>
    <source>
        <tissue>Leukemic T-cell</tissue>
    </source>
</reference>
<reference key="11">
    <citation type="journal article" date="2011" name="BMC Syst. Biol.">
        <title>Initial characterization of the human central proteome.</title>
        <authorList>
            <person name="Burkard T.R."/>
            <person name="Planyavsky M."/>
            <person name="Kaupe I."/>
            <person name="Breitwieser F.P."/>
            <person name="Buerckstuemmer T."/>
            <person name="Bennett K.L."/>
            <person name="Superti-Furga G."/>
            <person name="Colinge J."/>
        </authorList>
    </citation>
    <scope>IDENTIFICATION BY MASS SPECTROMETRY [LARGE SCALE ANALYSIS]</scope>
</reference>
<reference key="12">
    <citation type="journal article" date="2013" name="J. Proteome Res.">
        <title>Toward a comprehensive characterization of a human cancer cell phosphoproteome.</title>
        <authorList>
            <person name="Zhou H."/>
            <person name="Di Palma S."/>
            <person name="Preisinger C."/>
            <person name="Peng M."/>
            <person name="Polat A.N."/>
            <person name="Heck A.J."/>
            <person name="Mohammed S."/>
        </authorList>
    </citation>
    <scope>PHOSPHORYLATION [LARGE SCALE ANALYSIS] AT SER-130; SER-138; SER-146; SER-156; SER-159 AND SER-163</scope>
    <scope>IDENTIFICATION BY MASS SPECTROMETRY [LARGE SCALE ANALYSIS]</scope>
    <source>
        <tissue>Cervix carcinoma</tissue>
        <tissue>Erythroleukemia</tissue>
    </source>
</reference>
<reference key="13">
    <citation type="journal article" date="2014" name="J. Proteomics">
        <title>An enzyme assisted RP-RPLC approach for in-depth analysis of human liver phosphoproteome.</title>
        <authorList>
            <person name="Bian Y."/>
            <person name="Song C."/>
            <person name="Cheng K."/>
            <person name="Dong M."/>
            <person name="Wang F."/>
            <person name="Huang J."/>
            <person name="Sun D."/>
            <person name="Wang L."/>
            <person name="Ye M."/>
            <person name="Zou H."/>
        </authorList>
    </citation>
    <scope>IDENTIFICATION BY MASS SPECTROMETRY [LARGE SCALE ANALYSIS]</scope>
    <source>
        <tissue>Liver</tissue>
    </source>
</reference>
<reference key="14">
    <citation type="submission" date="2005-11" db="PDB data bank">
        <title>Solution structure of RRM domain in A18 HNRNP.</title>
        <authorList>
            <consortium name="RIKEN structural genomics initiative (RSGI)"/>
        </authorList>
    </citation>
    <scope>STRUCTURE BY NMR OF 1-90</scope>
</reference>
<dbReference type="EMBL" id="D78134">
    <property type="protein sequence ID" value="BAA11212.1"/>
    <property type="molecule type" value="mRNA"/>
</dbReference>
<dbReference type="EMBL" id="AF021336">
    <property type="protein sequence ID" value="AAC51787.1"/>
    <property type="molecule type" value="mRNA"/>
</dbReference>
<dbReference type="EMBL" id="AK094781">
    <property type="protein sequence ID" value="BAG52929.1"/>
    <property type="molecule type" value="mRNA"/>
</dbReference>
<dbReference type="EMBL" id="AK304470">
    <property type="protein sequence ID" value="BAG65284.1"/>
    <property type="molecule type" value="mRNA"/>
</dbReference>
<dbReference type="EMBL" id="AC004221">
    <property type="status" value="NOT_ANNOTATED_CDS"/>
    <property type="molecule type" value="Genomic_DNA"/>
</dbReference>
<dbReference type="EMBL" id="AC004258">
    <property type="protein sequence ID" value="AAC04895.1"/>
    <property type="molecule type" value="Genomic_DNA"/>
</dbReference>
<dbReference type="EMBL" id="BC000403">
    <property type="protein sequence ID" value="AAH00403.1"/>
    <property type="molecule type" value="mRNA"/>
</dbReference>
<dbReference type="EMBL" id="BC000901">
    <property type="protein sequence ID" value="AAH00901.1"/>
    <property type="molecule type" value="mRNA"/>
</dbReference>
<dbReference type="CCDS" id="CCDS12059.1">
    <molecule id="Q14011-1"/>
</dbReference>
<dbReference type="RefSeq" id="NP_001271.1">
    <molecule id="Q14011-1"/>
    <property type="nucleotide sequence ID" value="NM_001280.3"/>
</dbReference>
<dbReference type="RefSeq" id="NP_001287744.1">
    <property type="nucleotide sequence ID" value="NM_001300815.1"/>
</dbReference>
<dbReference type="RefSeq" id="NP_001287758.1">
    <property type="nucleotide sequence ID" value="NM_001300829.1"/>
</dbReference>
<dbReference type="RefSeq" id="XP_006722700.1">
    <molecule id="Q14011-1"/>
    <property type="nucleotide sequence ID" value="XM_006722637.2"/>
</dbReference>
<dbReference type="RefSeq" id="XP_054175690.1">
    <molecule id="Q14011-1"/>
    <property type="nucleotide sequence ID" value="XM_054319715.1"/>
</dbReference>
<dbReference type="PDB" id="1X5S">
    <property type="method" value="NMR"/>
    <property type="chains" value="A=1-89"/>
</dbReference>
<dbReference type="PDB" id="5TBX">
    <property type="method" value="X-ray"/>
    <property type="resolution" value="1.77 A"/>
    <property type="chains" value="A/B=1-91"/>
</dbReference>
<dbReference type="PDB" id="8CMK">
    <property type="method" value="X-ray"/>
    <property type="resolution" value="2.94 A"/>
    <property type="chains" value="C/D/E=138-172"/>
</dbReference>
<dbReference type="PDBsum" id="1X5S"/>
<dbReference type="PDBsum" id="5TBX"/>
<dbReference type="PDBsum" id="8CMK"/>
<dbReference type="SMR" id="Q14011"/>
<dbReference type="BioGRID" id="107573">
    <property type="interactions" value="168"/>
</dbReference>
<dbReference type="CORUM" id="Q14011"/>
<dbReference type="FunCoup" id="Q14011">
    <property type="interactions" value="2895"/>
</dbReference>
<dbReference type="IntAct" id="Q14011">
    <property type="interactions" value="93"/>
</dbReference>
<dbReference type="MINT" id="Q14011"/>
<dbReference type="STRING" id="9606.ENSP00000466025"/>
<dbReference type="GlyGen" id="Q14011">
    <property type="glycosylation" value="1 site, 1 O-linked glycan (1 site)"/>
</dbReference>
<dbReference type="iPTMnet" id="Q14011"/>
<dbReference type="PhosphoSitePlus" id="Q14011"/>
<dbReference type="BioMuta" id="CIRBP"/>
<dbReference type="DMDM" id="5921786"/>
<dbReference type="REPRODUCTION-2DPAGE" id="IPI00180954"/>
<dbReference type="jPOST" id="Q14011"/>
<dbReference type="MassIVE" id="Q14011"/>
<dbReference type="PaxDb" id="9606-ENSP00000466897"/>
<dbReference type="PeptideAtlas" id="Q14011"/>
<dbReference type="ProteomicsDB" id="3661"/>
<dbReference type="ProteomicsDB" id="5861"/>
<dbReference type="ProteomicsDB" id="59794">
    <molecule id="Q14011-1"/>
</dbReference>
<dbReference type="Pumba" id="Q14011"/>
<dbReference type="Antibodypedia" id="22628">
    <property type="antibodies" value="364 antibodies from 36 providers"/>
</dbReference>
<dbReference type="DNASU" id="1153"/>
<dbReference type="Ensembl" id="ENST00000320936.9">
    <molecule id="Q14011-1"/>
    <property type="protein sequence ID" value="ENSP00000322887.4"/>
    <property type="gene ID" value="ENSG00000099622.14"/>
</dbReference>
<dbReference type="Ensembl" id="ENST00000413636.6">
    <molecule id="Q14011-2"/>
    <property type="protein sequence ID" value="ENSP00000412831.2"/>
    <property type="gene ID" value="ENSG00000099622.14"/>
</dbReference>
<dbReference type="Ensembl" id="ENST00000585630.5">
    <molecule id="Q14011-1"/>
    <property type="protein sequence ID" value="ENSP00000466110.1"/>
    <property type="gene ID" value="ENSG00000099622.14"/>
</dbReference>
<dbReference type="Ensembl" id="ENST00000586472.5">
    <molecule id="Q14011-1"/>
    <property type="protein sequence ID" value="ENSP00000465779.1"/>
    <property type="gene ID" value="ENSG00000099622.14"/>
</dbReference>
<dbReference type="Ensembl" id="ENST00000588030.5">
    <molecule id="Q14011-1"/>
    <property type="protein sequence ID" value="ENSP00000468788.1"/>
    <property type="gene ID" value="ENSG00000099622.14"/>
</dbReference>
<dbReference type="Ensembl" id="ENST00000588090.5">
    <molecule id="Q14011-1"/>
    <property type="protein sequence ID" value="ENSP00000466207.1"/>
    <property type="gene ID" value="ENSG00000099622.14"/>
</dbReference>
<dbReference type="GeneID" id="1153"/>
<dbReference type="KEGG" id="hsa:1153"/>
<dbReference type="UCSC" id="uc010xgl.2">
    <molecule id="Q14011-1"/>
    <property type="organism name" value="human"/>
</dbReference>
<dbReference type="AGR" id="HGNC:1982"/>
<dbReference type="CTD" id="1153"/>
<dbReference type="DisGeNET" id="1153"/>
<dbReference type="GeneCards" id="CIRBP"/>
<dbReference type="HGNC" id="HGNC:1982">
    <property type="gene designation" value="CIRBP"/>
</dbReference>
<dbReference type="HPA" id="ENSG00000099622">
    <property type="expression patterns" value="Low tissue specificity"/>
</dbReference>
<dbReference type="MIM" id="602649">
    <property type="type" value="gene"/>
</dbReference>
<dbReference type="neXtProt" id="NX_Q14011"/>
<dbReference type="OpenTargets" id="ENSG00000099622"/>
<dbReference type="PharmGKB" id="PA26519"/>
<dbReference type="VEuPathDB" id="HostDB:ENSG00000099622"/>
<dbReference type="eggNOG" id="KOG0118">
    <property type="taxonomic scope" value="Eukaryota"/>
</dbReference>
<dbReference type="GeneTree" id="ENSGT00940000153524"/>
<dbReference type="InParanoid" id="Q14011"/>
<dbReference type="OrthoDB" id="439808at2759"/>
<dbReference type="PAN-GO" id="Q14011">
    <property type="GO annotations" value="3 GO annotations based on evolutionary models"/>
</dbReference>
<dbReference type="PhylomeDB" id="Q14011"/>
<dbReference type="PathwayCommons" id="Q14011"/>
<dbReference type="SignaLink" id="Q14011"/>
<dbReference type="BioGRID-ORCS" id="1153">
    <property type="hits" value="22 hits in 1155 CRISPR screens"/>
</dbReference>
<dbReference type="CD-CODE" id="1A18FFC4">
    <property type="entry name" value="Paraspeckle"/>
</dbReference>
<dbReference type="CD-CODE" id="6209F224">
    <property type="entry name" value="Synthetic Condensate 000281"/>
</dbReference>
<dbReference type="CD-CODE" id="6F24707C">
    <property type="entry name" value="Cajal body"/>
</dbReference>
<dbReference type="CD-CODE" id="91857CE7">
    <property type="entry name" value="Nucleolus"/>
</dbReference>
<dbReference type="CD-CODE" id="DEE660B4">
    <property type="entry name" value="Stress granule"/>
</dbReference>
<dbReference type="ChiTaRS" id="CIRBP">
    <property type="organism name" value="human"/>
</dbReference>
<dbReference type="EvolutionaryTrace" id="Q14011"/>
<dbReference type="GeneWiki" id="CIRBP"/>
<dbReference type="GenomeRNAi" id="1153"/>
<dbReference type="Pharos" id="Q14011">
    <property type="development level" value="Tbio"/>
</dbReference>
<dbReference type="PRO" id="PR:Q14011"/>
<dbReference type="Proteomes" id="UP000005640">
    <property type="component" value="Chromosome 19"/>
</dbReference>
<dbReference type="RNAct" id="Q14011">
    <property type="molecule type" value="protein"/>
</dbReference>
<dbReference type="Bgee" id="ENSG00000099622">
    <property type="expression patterns" value="Expressed in tibia and 201 other cell types or tissues"/>
</dbReference>
<dbReference type="ExpressionAtlas" id="Q14011">
    <property type="expression patterns" value="baseline and differential"/>
</dbReference>
<dbReference type="GO" id="GO:0005737">
    <property type="term" value="C:cytoplasm"/>
    <property type="evidence" value="ECO:0000314"/>
    <property type="project" value="UniProtKB"/>
</dbReference>
<dbReference type="GO" id="GO:0010494">
    <property type="term" value="C:cytoplasmic stress granule"/>
    <property type="evidence" value="ECO:0000250"/>
    <property type="project" value="UniProtKB"/>
</dbReference>
<dbReference type="GO" id="GO:0005654">
    <property type="term" value="C:nucleoplasm"/>
    <property type="evidence" value="ECO:0000314"/>
    <property type="project" value="HPA"/>
</dbReference>
<dbReference type="GO" id="GO:0005634">
    <property type="term" value="C:nucleus"/>
    <property type="evidence" value="ECO:0000314"/>
    <property type="project" value="UniProtKB"/>
</dbReference>
<dbReference type="GO" id="GO:0005681">
    <property type="term" value="C:spliceosomal complex"/>
    <property type="evidence" value="ECO:0000318"/>
    <property type="project" value="GO_Central"/>
</dbReference>
<dbReference type="GO" id="GO:0003730">
    <property type="term" value="F:mRNA 3'-UTR binding"/>
    <property type="evidence" value="ECO:0000314"/>
    <property type="project" value="UniProtKB"/>
</dbReference>
<dbReference type="GO" id="GO:0003723">
    <property type="term" value="F:RNA binding"/>
    <property type="evidence" value="ECO:0007005"/>
    <property type="project" value="UniProtKB"/>
</dbReference>
<dbReference type="GO" id="GO:0070181">
    <property type="term" value="F:small ribosomal subunit rRNA binding"/>
    <property type="evidence" value="ECO:0000314"/>
    <property type="project" value="UniProtKB"/>
</dbReference>
<dbReference type="GO" id="GO:0030371">
    <property type="term" value="F:translation repressor activity"/>
    <property type="evidence" value="ECO:0000250"/>
    <property type="project" value="UniProtKB"/>
</dbReference>
<dbReference type="GO" id="GO:0048255">
    <property type="term" value="P:mRNA stabilization"/>
    <property type="evidence" value="ECO:0000314"/>
    <property type="project" value="UniProtKB"/>
</dbReference>
<dbReference type="GO" id="GO:0048026">
    <property type="term" value="P:positive regulation of mRNA splicing, via spliceosome"/>
    <property type="evidence" value="ECO:0000318"/>
    <property type="project" value="GO_Central"/>
</dbReference>
<dbReference type="GO" id="GO:0045727">
    <property type="term" value="P:positive regulation of translation"/>
    <property type="evidence" value="ECO:0000314"/>
    <property type="project" value="UniProtKB"/>
</dbReference>
<dbReference type="GO" id="GO:0009409">
    <property type="term" value="P:response to cold"/>
    <property type="evidence" value="ECO:0000304"/>
    <property type="project" value="ProtInc"/>
</dbReference>
<dbReference type="GO" id="GO:0009411">
    <property type="term" value="P:response to UV"/>
    <property type="evidence" value="ECO:0000314"/>
    <property type="project" value="UniProtKB"/>
</dbReference>
<dbReference type="GO" id="GO:0034063">
    <property type="term" value="P:stress granule assembly"/>
    <property type="evidence" value="ECO:0000250"/>
    <property type="project" value="UniProtKB"/>
</dbReference>
<dbReference type="CDD" id="cd12449">
    <property type="entry name" value="RRM_CIRBP_RBM3"/>
    <property type="match status" value="1"/>
</dbReference>
<dbReference type="FunFam" id="3.30.70.330:FF:000174">
    <property type="entry name" value="cold-inducible RNA-binding protein isoform X2"/>
    <property type="match status" value="1"/>
</dbReference>
<dbReference type="Gene3D" id="3.30.70.330">
    <property type="match status" value="1"/>
</dbReference>
<dbReference type="InterPro" id="IPR012677">
    <property type="entry name" value="Nucleotide-bd_a/b_plait_sf"/>
</dbReference>
<dbReference type="InterPro" id="IPR035979">
    <property type="entry name" value="RBD_domain_sf"/>
</dbReference>
<dbReference type="InterPro" id="IPR050441">
    <property type="entry name" value="RBM"/>
</dbReference>
<dbReference type="InterPro" id="IPR034278">
    <property type="entry name" value="RBM3/CIRBP_RRM"/>
</dbReference>
<dbReference type="InterPro" id="IPR000504">
    <property type="entry name" value="RRM_dom"/>
</dbReference>
<dbReference type="InterPro" id="IPR003954">
    <property type="entry name" value="RRM_dom_euk"/>
</dbReference>
<dbReference type="PANTHER" id="PTHR48034">
    <property type="entry name" value="TRANSFORMER-2 SEX-DETERMINING PROTEIN-RELATED"/>
    <property type="match status" value="1"/>
</dbReference>
<dbReference type="Pfam" id="PF00076">
    <property type="entry name" value="RRM_1"/>
    <property type="match status" value="1"/>
</dbReference>
<dbReference type="SMART" id="SM00360">
    <property type="entry name" value="RRM"/>
    <property type="match status" value="1"/>
</dbReference>
<dbReference type="SMART" id="SM00361">
    <property type="entry name" value="RRM_1"/>
    <property type="match status" value="1"/>
</dbReference>
<dbReference type="SUPFAM" id="SSF54928">
    <property type="entry name" value="RNA-binding domain, RBD"/>
    <property type="match status" value="1"/>
</dbReference>
<dbReference type="PROSITE" id="PS50102">
    <property type="entry name" value="RRM"/>
    <property type="match status" value="1"/>
</dbReference>
<keyword id="KW-0002">3D-structure</keyword>
<keyword id="KW-0010">Activator</keyword>
<keyword id="KW-0025">Alternative splicing</keyword>
<keyword id="KW-0963">Cytoplasm</keyword>
<keyword id="KW-0539">Nucleus</keyword>
<keyword id="KW-0597">Phosphoprotein</keyword>
<keyword id="KW-1267">Proteomics identification</keyword>
<keyword id="KW-1185">Reference proteome</keyword>
<keyword id="KW-0678">Repressor</keyword>
<keyword id="KW-0694">RNA-binding</keyword>
<keyword id="KW-0346">Stress response</keyword>
<name>CIRBP_HUMAN</name>
<evidence type="ECO:0000250" key="1"/>
<evidence type="ECO:0000255" key="2">
    <source>
        <dbReference type="PROSITE-ProRule" id="PRU00176"/>
    </source>
</evidence>
<evidence type="ECO:0000256" key="3">
    <source>
        <dbReference type="SAM" id="MobiDB-lite"/>
    </source>
</evidence>
<evidence type="ECO:0000269" key="4">
    <source>
    </source>
</evidence>
<evidence type="ECO:0000269" key="5">
    <source>
    </source>
</evidence>
<evidence type="ECO:0000269" key="6">
    <source>
    </source>
</evidence>
<evidence type="ECO:0000303" key="7">
    <source>
    </source>
</evidence>
<evidence type="ECO:0007744" key="8">
    <source>
    </source>
</evidence>
<evidence type="ECO:0007829" key="9">
    <source>
        <dbReference type="PDB" id="5TBX"/>
    </source>
</evidence>
<evidence type="ECO:0007829" key="10">
    <source>
        <dbReference type="PDB" id="8CMK"/>
    </source>
</evidence>
<gene>
    <name type="primary">CIRBP</name>
    <name type="synonym">A18HNRNP</name>
    <name type="synonym">CIRP</name>
</gene>
<proteinExistence type="evidence at protein level"/>
<protein>
    <recommendedName>
        <fullName>Cold-inducible RNA-binding protein</fullName>
    </recommendedName>
    <alternativeName>
        <fullName>A18 hnRNP</fullName>
    </alternativeName>
    <alternativeName>
        <fullName>Glycine-rich RNA-binding protein CIRP</fullName>
    </alternativeName>
</protein>
<accession>Q14011</accession>
<accession>B3KT17</accession>
<accession>B4E2X2</accession>
<sequence length="172" mass="18648">MASDEGKLFVGGLSFDTNEQSLEQVFSKYGQISEVVVVKDRETQRSRGFGFVTFENIDDAKDAMMAMNGKSVDGRQIRVDQAGKSSDNRSRGYRGGSAGGRGFFRGGRGRGRGFSRGGGDRGYGGNRFESRSGGYGGSRDYYSSRSQSGGYSDRSSGGSYRDSYDSYATHNE</sequence>
<organism>
    <name type="scientific">Homo sapiens</name>
    <name type="common">Human</name>
    <dbReference type="NCBI Taxonomy" id="9606"/>
    <lineage>
        <taxon>Eukaryota</taxon>
        <taxon>Metazoa</taxon>
        <taxon>Chordata</taxon>
        <taxon>Craniata</taxon>
        <taxon>Vertebrata</taxon>
        <taxon>Euteleostomi</taxon>
        <taxon>Mammalia</taxon>
        <taxon>Eutheria</taxon>
        <taxon>Euarchontoglires</taxon>
        <taxon>Primates</taxon>
        <taxon>Haplorrhini</taxon>
        <taxon>Catarrhini</taxon>
        <taxon>Hominidae</taxon>
        <taxon>Homo</taxon>
    </lineage>
</organism>
<feature type="chain" id="PRO_0000081503" description="Cold-inducible RNA-binding protein">
    <location>
        <begin position="1"/>
        <end position="172"/>
    </location>
</feature>
<feature type="domain" description="RRM" evidence="2">
    <location>
        <begin position="6"/>
        <end position="84"/>
    </location>
</feature>
<feature type="region of interest" description="Disordered" evidence="3">
    <location>
        <begin position="69"/>
        <end position="172"/>
    </location>
</feature>
<feature type="compositionally biased region" description="Gly residues" evidence="3">
    <location>
        <begin position="93"/>
        <end position="106"/>
    </location>
</feature>
<feature type="compositionally biased region" description="Gly residues" evidence="3">
    <location>
        <begin position="114"/>
        <end position="125"/>
    </location>
</feature>
<feature type="compositionally biased region" description="Low complexity" evidence="3">
    <location>
        <begin position="138"/>
        <end position="172"/>
    </location>
</feature>
<feature type="modified residue" description="Phosphoserine" evidence="8">
    <location>
        <position position="130"/>
    </location>
</feature>
<feature type="modified residue" description="Phosphoserine" evidence="8">
    <location>
        <position position="138"/>
    </location>
</feature>
<feature type="modified residue" description="Phosphoserine" evidence="8">
    <location>
        <position position="146"/>
    </location>
</feature>
<feature type="modified residue" description="Phosphoserine" evidence="8">
    <location>
        <position position="156"/>
    </location>
</feature>
<feature type="modified residue" description="Phosphoserine" evidence="8">
    <location>
        <position position="159"/>
    </location>
</feature>
<feature type="modified residue" description="Phosphoserine" evidence="8">
    <location>
        <position position="163"/>
    </location>
</feature>
<feature type="splice variant" id="VSP_056895" description="In isoform 3." evidence="7">
    <original>MASDEGKLFVGGLSFDTNEQSLEQVFSKYGQISEVVVVKDRETQRSRGFGFVTFENIDDAKDAMMAMNG</original>
    <variation>MSSRWSRSSQSTDRSL</variation>
    <location>
        <begin position="1"/>
        <end position="69"/>
    </location>
</feature>
<feature type="splice variant" id="VSP_056402" description="In isoform 2." evidence="7">
    <location>
        <begin position="83"/>
        <end position="116"/>
    </location>
</feature>
<feature type="splice variant" id="VSP_056403" description="In isoform 2 and isoform 3." evidence="7">
    <original>Y</original>
    <variation>YGKSHSEGATLLWPAVGARFTLVPSPSTLGWTLRPCHCACPEEAHLSSQSHFYRRTQKPNETDQKGKGERGPAGQSARCMCGRRPASLGCGGWLLPGRRPRPGLASGVKLPLVASVPLHCACFLSS</variation>
    <location>
        <position position="167"/>
    </location>
</feature>
<feature type="strand" evidence="9">
    <location>
        <begin position="7"/>
        <end position="12"/>
    </location>
</feature>
<feature type="helix" evidence="9">
    <location>
        <begin position="19"/>
        <end position="26"/>
    </location>
</feature>
<feature type="helix" evidence="9">
    <location>
        <begin position="27"/>
        <end position="29"/>
    </location>
</feature>
<feature type="strand" evidence="9">
    <location>
        <begin position="32"/>
        <end position="39"/>
    </location>
</feature>
<feature type="turn" evidence="9">
    <location>
        <begin position="41"/>
        <end position="43"/>
    </location>
</feature>
<feature type="strand" evidence="9">
    <location>
        <begin position="46"/>
        <end position="56"/>
    </location>
</feature>
<feature type="helix" evidence="9">
    <location>
        <begin position="57"/>
        <end position="67"/>
    </location>
</feature>
<feature type="strand" evidence="9">
    <location>
        <begin position="78"/>
        <end position="81"/>
    </location>
</feature>
<feature type="helix" evidence="10">
    <location>
        <begin position="160"/>
        <end position="164"/>
    </location>
</feature>
<feature type="turn" evidence="10">
    <location>
        <begin position="167"/>
        <end position="169"/>
    </location>
</feature>